<name>CWC22_XENLA</name>
<protein>
    <recommendedName>
        <fullName>Pre-mRNA-splicing factor CWC22 homolog</fullName>
    </recommendedName>
    <alternativeName>
        <fullName>Nucampholin homolog</fullName>
    </alternativeName>
</protein>
<feature type="chain" id="PRO_0000302010" description="Pre-mRNA-splicing factor CWC22 homolog">
    <location>
        <begin position="1"/>
        <end position="803"/>
    </location>
</feature>
<feature type="domain" description="MIF4G" evidence="2">
    <location>
        <begin position="210"/>
        <end position="393"/>
    </location>
</feature>
<feature type="domain" description="MI" evidence="2">
    <location>
        <begin position="501"/>
        <end position="617"/>
    </location>
</feature>
<feature type="region of interest" description="Disordered" evidence="3">
    <location>
        <begin position="1"/>
        <end position="178"/>
    </location>
</feature>
<feature type="region of interest" description="Disordered" evidence="3">
    <location>
        <begin position="451"/>
        <end position="490"/>
    </location>
</feature>
<feature type="region of interest" description="Disordered" evidence="3">
    <location>
        <begin position="703"/>
        <end position="803"/>
    </location>
</feature>
<feature type="compositionally biased region" description="Polar residues" evidence="3">
    <location>
        <begin position="1"/>
        <end position="10"/>
    </location>
</feature>
<feature type="compositionally biased region" description="Basic and acidic residues" evidence="3">
    <location>
        <begin position="12"/>
        <end position="22"/>
    </location>
</feature>
<feature type="compositionally biased region" description="Basic and acidic residues" evidence="3">
    <location>
        <begin position="33"/>
        <end position="135"/>
    </location>
</feature>
<feature type="compositionally biased region" description="Acidic residues" evidence="3">
    <location>
        <begin position="454"/>
        <end position="480"/>
    </location>
</feature>
<feature type="compositionally biased region" description="Low complexity" evidence="3">
    <location>
        <begin position="709"/>
        <end position="744"/>
    </location>
</feature>
<feature type="compositionally biased region" description="Basic residues" evidence="3">
    <location>
        <begin position="748"/>
        <end position="767"/>
    </location>
</feature>
<feature type="compositionally biased region" description="Basic and acidic residues" evidence="3">
    <location>
        <begin position="787"/>
        <end position="803"/>
    </location>
</feature>
<dbReference type="EMBL" id="BC094259">
    <property type="protein sequence ID" value="AAH94259.1"/>
    <property type="molecule type" value="mRNA"/>
</dbReference>
<dbReference type="RefSeq" id="NP_001089418.1">
    <property type="nucleotide sequence ID" value="NM_001095949.1"/>
</dbReference>
<dbReference type="SMR" id="Q52KN9"/>
<dbReference type="DNASU" id="734468"/>
<dbReference type="GeneID" id="734468"/>
<dbReference type="KEGG" id="xla:734468"/>
<dbReference type="AGR" id="Xenbase:XB-GENE-1010542"/>
<dbReference type="CTD" id="734468"/>
<dbReference type="Xenbase" id="XB-GENE-1010542">
    <property type="gene designation" value="cwc22.S"/>
</dbReference>
<dbReference type="OMA" id="ILTEDMR"/>
<dbReference type="OrthoDB" id="1924287at2759"/>
<dbReference type="Proteomes" id="UP000186698">
    <property type="component" value="Chromosome 9_10S"/>
</dbReference>
<dbReference type="Bgee" id="734468">
    <property type="expression patterns" value="Expressed in gastrula and 19 other cell types or tissues"/>
</dbReference>
<dbReference type="GO" id="GO:0071013">
    <property type="term" value="C:catalytic step 2 spliceosome"/>
    <property type="evidence" value="ECO:0000318"/>
    <property type="project" value="GO_Central"/>
</dbReference>
<dbReference type="GO" id="GO:0016607">
    <property type="term" value="C:nuclear speck"/>
    <property type="evidence" value="ECO:0007669"/>
    <property type="project" value="UniProtKB-SubCell"/>
</dbReference>
<dbReference type="GO" id="GO:0005634">
    <property type="term" value="C:nucleus"/>
    <property type="evidence" value="ECO:0000250"/>
    <property type="project" value="UniProtKB"/>
</dbReference>
<dbReference type="GO" id="GO:0005681">
    <property type="term" value="C:spliceosomal complex"/>
    <property type="evidence" value="ECO:0000250"/>
    <property type="project" value="UniProtKB"/>
</dbReference>
<dbReference type="GO" id="GO:0071006">
    <property type="term" value="C:U2-type catalytic step 1 spliceosome"/>
    <property type="evidence" value="ECO:0000250"/>
    <property type="project" value="UniProtKB"/>
</dbReference>
<dbReference type="GO" id="GO:0071007">
    <property type="term" value="C:U2-type catalytic step 2 spliceosome"/>
    <property type="evidence" value="ECO:0000250"/>
    <property type="project" value="UniProtKB"/>
</dbReference>
<dbReference type="GO" id="GO:0071005">
    <property type="term" value="C:U2-type precatalytic spliceosome"/>
    <property type="evidence" value="ECO:0000250"/>
    <property type="project" value="UniProtKB"/>
</dbReference>
<dbReference type="GO" id="GO:0003723">
    <property type="term" value="F:RNA binding"/>
    <property type="evidence" value="ECO:0000250"/>
    <property type="project" value="UniProtKB"/>
</dbReference>
<dbReference type="GO" id="GO:0000398">
    <property type="term" value="P:mRNA splicing, via spliceosome"/>
    <property type="evidence" value="ECO:0000250"/>
    <property type="project" value="UniProtKB"/>
</dbReference>
<dbReference type="FunFam" id="1.25.40.180:FF:000004">
    <property type="entry name" value="pre-mRNA-splicing factor CWC22 homolog"/>
    <property type="match status" value="1"/>
</dbReference>
<dbReference type="Gene3D" id="1.25.40.180">
    <property type="match status" value="1"/>
</dbReference>
<dbReference type="InterPro" id="IPR016024">
    <property type="entry name" value="ARM-type_fold"/>
</dbReference>
<dbReference type="InterPro" id="IPR050781">
    <property type="entry name" value="CWC22_splicing_factor"/>
</dbReference>
<dbReference type="InterPro" id="IPR003891">
    <property type="entry name" value="Initiation_fac_eIF4g_MI"/>
</dbReference>
<dbReference type="InterPro" id="IPR003890">
    <property type="entry name" value="MIF4G-like_typ-3"/>
</dbReference>
<dbReference type="PANTHER" id="PTHR18034">
    <property type="entry name" value="CELL CYCLE CONTROL PROTEIN CWF22-RELATED"/>
    <property type="match status" value="1"/>
</dbReference>
<dbReference type="PANTHER" id="PTHR18034:SF3">
    <property type="entry name" value="PRE-MRNA-SPLICING FACTOR CWC22 HOMOLOG"/>
    <property type="match status" value="1"/>
</dbReference>
<dbReference type="Pfam" id="PF02847">
    <property type="entry name" value="MA3"/>
    <property type="match status" value="1"/>
</dbReference>
<dbReference type="SMART" id="SM00544">
    <property type="entry name" value="MA3"/>
    <property type="match status" value="1"/>
</dbReference>
<dbReference type="SMART" id="SM00543">
    <property type="entry name" value="MIF4G"/>
    <property type="match status" value="1"/>
</dbReference>
<dbReference type="SUPFAM" id="SSF48371">
    <property type="entry name" value="ARM repeat"/>
    <property type="match status" value="1"/>
</dbReference>
<dbReference type="PROSITE" id="PS51366">
    <property type="entry name" value="MI"/>
    <property type="match status" value="1"/>
</dbReference>
<sequence length="803" mass="92719">MKSSVAQVRGSNYDKVDTRSSSERSSSPEDSNEERSPSPRDRGYSNRSRDYSDRDRYEDRSRSGRYDRSDESRRRERERSTSPRDRGYTDRRRGYSDRDGYGNDRSRNGRYDRSEDNREREKRQNYQDRDYEKRSPPARRRSPPARRSEEQTEEQNQTEPPVKKKKEELDPILTRTGGAYIPPARLRMMQEQITDKSSMAYQRMSWEALKKSINGLVNKVNVSNIGNIIQELLQENIVRGRGLLARSVLQAQSASPIFTHVYAALVSIINSKFPHIGELILKRLILNFRKGYRRNDKQLCLTSSKFVAHLINQNVAHEVLALEMLTLLLERPNDDSVEVAIGFLKESGLKLTQVTPRGINAIFERLRNILHESEIDKRVQYMIEVMFAVRKDGFKDHPVIPEGLDLVEEEDQFTHMLPLEDDYNQEDVLNVFKMDPDFLENEEKYKAIKKEILDEGDSDSEGDANEGSEDESEEEEEDGQEAGTEGEKMTIHDKTEVNLVAFRRTIYLAIQSSLDFEECAHKLIKMDFPESQTKELCNMILDCCAQQRTYEKFFGLLAGRFCLLKKEYLEAFENIFKEQFETIHRLETNKLRNVAKMFAHLLYTDSLPWSVLECMNLSEETTTSSSRIFVKIFFQELCEYMGLPKLNARLKDVTLQPFFQGLLPMDNPKNTRFAINFFTSIGLGGLTDELREHLKNAPKMIMTQKQNVESSDSSSDSSSGSESSSDSDSSSSSSSESSSSSSDSDSSRRKKHSQKKKKSREAHKAASKKQAPDDRRKEAPKHKHQKEKYDDKQSRKSKRDSKN</sequence>
<reference key="1">
    <citation type="submission" date="2005-04" db="EMBL/GenBank/DDBJ databases">
        <authorList>
            <consortium name="NIH - Xenopus Gene Collection (XGC) project"/>
        </authorList>
    </citation>
    <scope>NUCLEOTIDE SEQUENCE [LARGE SCALE MRNA]</scope>
    <source>
        <tissue>Oocyte</tissue>
    </source>
</reference>
<accession>Q52KN9</accession>
<keyword id="KW-0507">mRNA processing</keyword>
<keyword id="KW-0508">mRNA splicing</keyword>
<keyword id="KW-0539">Nucleus</keyword>
<keyword id="KW-1185">Reference proteome</keyword>
<keyword id="KW-0747">Spliceosome</keyword>
<evidence type="ECO:0000250" key="1">
    <source>
        <dbReference type="UniProtKB" id="Q9HCG8"/>
    </source>
</evidence>
<evidence type="ECO:0000255" key="2">
    <source>
        <dbReference type="PROSITE-ProRule" id="PRU00698"/>
    </source>
</evidence>
<evidence type="ECO:0000256" key="3">
    <source>
        <dbReference type="SAM" id="MobiDB-lite"/>
    </source>
</evidence>
<evidence type="ECO:0000305" key="4"/>
<proteinExistence type="evidence at transcript level"/>
<organism>
    <name type="scientific">Xenopus laevis</name>
    <name type="common">African clawed frog</name>
    <dbReference type="NCBI Taxonomy" id="8355"/>
    <lineage>
        <taxon>Eukaryota</taxon>
        <taxon>Metazoa</taxon>
        <taxon>Chordata</taxon>
        <taxon>Craniata</taxon>
        <taxon>Vertebrata</taxon>
        <taxon>Euteleostomi</taxon>
        <taxon>Amphibia</taxon>
        <taxon>Batrachia</taxon>
        <taxon>Anura</taxon>
        <taxon>Pipoidea</taxon>
        <taxon>Pipidae</taxon>
        <taxon>Xenopodinae</taxon>
        <taxon>Xenopus</taxon>
        <taxon>Xenopus</taxon>
    </lineage>
</organism>
<gene>
    <name type="primary">cwc22</name>
</gene>
<comment type="function">
    <text evidence="1">Required for pre-mRNA splicing as component of the spliceosome. Promotes exon-junction complex (EJC) assembly.</text>
</comment>
<comment type="subunit">
    <text evidence="1">Component of the pre-catalytic spliceosome B and the catalytic spliceosome C complexes.</text>
</comment>
<comment type="subcellular location">
    <subcellularLocation>
        <location evidence="1">Nucleus</location>
    </subcellularLocation>
    <subcellularLocation>
        <location evidence="1">Nucleus speckle</location>
    </subcellularLocation>
    <text evidence="1">Concentrates around speckles, which are sites of pre-mRNA synthesis and processing, where it colocalizes with EJC core proteins.</text>
</comment>
<comment type="similarity">
    <text evidence="4">Belongs to the CWC22 family.</text>
</comment>